<sequence length="252" mass="29706">MTQTPEALTTEQFKQAIIDKGQYYHIYHPFHVMMYEGKATQQQIQAWVANRYYYQINIPLKDAAIMANCPDQRVRQEWIQRMIDQDGEYPDGGGREAWLRLAEAVGLSREQVISEELVLPGVRFAVDAYVNFRRRASWREAASSSLTELFAPQIHQSRLDSWPQHYPWIDDKGYEYFRSRLSQARRDVEHGLTITLDSFTTFEQQERMLEILQFKLDILWSILDALTLAYVHNEAPYHSVTSKRVWHKGLFK</sequence>
<evidence type="ECO:0000250" key="1"/>
<evidence type="ECO:0000305" key="2"/>
<protein>
    <recommendedName>
        <fullName>Pyrroloquinoline-quinone synthase</fullName>
        <ecNumber>1.3.3.11</ecNumber>
    </recommendedName>
    <alternativeName>
        <fullName>Coenzyme PQQ synthesis protein C</fullName>
    </alternativeName>
    <alternativeName>
        <fullName>Coenzyme PQQ synthesis protein I</fullName>
    </alternativeName>
    <alternativeName>
        <fullName>Pyrroloquinoline quinone biosynthesis protein C</fullName>
    </alternativeName>
</protein>
<name>PQQC_ACICA</name>
<organism>
    <name type="scientific">Acinetobacter calcoaceticus</name>
    <dbReference type="NCBI Taxonomy" id="471"/>
    <lineage>
        <taxon>Bacteria</taxon>
        <taxon>Pseudomonadati</taxon>
        <taxon>Pseudomonadota</taxon>
        <taxon>Gammaproteobacteria</taxon>
        <taxon>Moraxellales</taxon>
        <taxon>Moraxellaceae</taxon>
        <taxon>Acinetobacter</taxon>
        <taxon>Acinetobacter calcoaceticus/baumannii complex</taxon>
    </lineage>
</organism>
<proteinExistence type="inferred from homology"/>
<gene>
    <name type="primary">pqqC</name>
    <name type="synonym">pqqI</name>
</gene>
<comment type="function">
    <text evidence="1">Ring cyclization and eight-electron oxidation of 3a-(2-amino-2-carboxyethyl)-4,5-dioxo-4,5,6,7,8,9-hexahydroquinoline-7,9-dicarboxylic-acid to PQQ.</text>
</comment>
<comment type="catalytic activity">
    <reaction>
        <text>6-(2-amino-2-carboxyethyl)-7,8-dioxo-1,2,3,4,7,8-hexahydroquinoline-2,4-dicarboxylate + 3 O2 = pyrroloquinoline quinone + 2 H2O2 + 2 H2O + H(+)</text>
        <dbReference type="Rhea" id="RHEA:10692"/>
        <dbReference type="ChEBI" id="CHEBI:15377"/>
        <dbReference type="ChEBI" id="CHEBI:15378"/>
        <dbReference type="ChEBI" id="CHEBI:15379"/>
        <dbReference type="ChEBI" id="CHEBI:16240"/>
        <dbReference type="ChEBI" id="CHEBI:58442"/>
        <dbReference type="ChEBI" id="CHEBI:58778"/>
        <dbReference type="EC" id="1.3.3.11"/>
    </reaction>
</comment>
<comment type="pathway">
    <text>Cofactor biosynthesis; pyrroloquinoline quinone biosynthesis.</text>
</comment>
<comment type="similarity">
    <text evidence="2">Belongs to the PqqC family.</text>
</comment>
<keyword id="KW-0560">Oxidoreductase</keyword>
<keyword id="KW-0884">PQQ biosynthesis</keyword>
<feature type="chain" id="PRO_0000219976" description="Pyrroloquinoline-quinone synthase">
    <location>
        <begin position="1"/>
        <end position="252"/>
    </location>
</feature>
<dbReference type="EC" id="1.3.3.11"/>
<dbReference type="EMBL" id="X06452">
    <property type="protein sequence ID" value="CAA29754.1"/>
    <property type="molecule type" value="Genomic_DNA"/>
</dbReference>
<dbReference type="PIR" id="D32252">
    <property type="entry name" value="D32252"/>
</dbReference>
<dbReference type="SMR" id="P07780"/>
<dbReference type="STRING" id="471.BUM88_09590"/>
<dbReference type="UniPathway" id="UPA00539"/>
<dbReference type="GO" id="GO:0033732">
    <property type="term" value="F:pyrroloquinoline-quinone synthase activity"/>
    <property type="evidence" value="ECO:0007669"/>
    <property type="project" value="UniProtKB-EC"/>
</dbReference>
<dbReference type="GO" id="GO:0018189">
    <property type="term" value="P:pyrroloquinoline quinone biosynthetic process"/>
    <property type="evidence" value="ECO:0007669"/>
    <property type="project" value="UniProtKB-UniRule"/>
</dbReference>
<dbReference type="GO" id="GO:0006790">
    <property type="term" value="P:sulfur compound metabolic process"/>
    <property type="evidence" value="ECO:0007669"/>
    <property type="project" value="UniProtKB-ARBA"/>
</dbReference>
<dbReference type="Gene3D" id="1.20.910.10">
    <property type="entry name" value="Heme oxygenase-like"/>
    <property type="match status" value="1"/>
</dbReference>
<dbReference type="HAMAP" id="MF_00654">
    <property type="entry name" value="PQQ_syn_PqqC"/>
    <property type="match status" value="1"/>
</dbReference>
<dbReference type="InterPro" id="IPR016084">
    <property type="entry name" value="Haem_Oase-like_multi-hlx"/>
</dbReference>
<dbReference type="InterPro" id="IPR011845">
    <property type="entry name" value="PqqC"/>
</dbReference>
<dbReference type="InterPro" id="IPR039068">
    <property type="entry name" value="PqqC-like"/>
</dbReference>
<dbReference type="InterPro" id="IPR004305">
    <property type="entry name" value="Thiaminase-2/PQQC"/>
</dbReference>
<dbReference type="NCBIfam" id="TIGR02111">
    <property type="entry name" value="PQQ_syn_pqqC"/>
    <property type="match status" value="1"/>
</dbReference>
<dbReference type="PANTHER" id="PTHR40279:SF3">
    <property type="entry name" value="4-AMINOBENZOATE SYNTHASE"/>
    <property type="match status" value="1"/>
</dbReference>
<dbReference type="PANTHER" id="PTHR40279">
    <property type="entry name" value="PQQC-LIKE PROTEIN"/>
    <property type="match status" value="1"/>
</dbReference>
<dbReference type="Pfam" id="PF03070">
    <property type="entry name" value="TENA_THI-4"/>
    <property type="match status" value="1"/>
</dbReference>
<dbReference type="SUPFAM" id="SSF48613">
    <property type="entry name" value="Heme oxygenase-like"/>
    <property type="match status" value="1"/>
</dbReference>
<reference key="1">
    <citation type="journal article" date="1989" name="J. Bacteriol.">
        <title>Acinetobacter calcoaceticus genes involved in biosynthesis of the coenzyme pyrrolo-quinoline-quinone: nucleotide sequence and expression in Escherichia coli K-12.</title>
        <authorList>
            <person name="Goosen N."/>
            <person name="Horsman H.P.A."/>
            <person name="Huinen R.G.M."/>
            <person name="van de Putte P."/>
        </authorList>
    </citation>
    <scope>NUCLEOTIDE SEQUENCE [GENOMIC DNA]</scope>
    <source>
        <strain>LMD 79.41</strain>
    </source>
</reference>
<accession>P07780</accession>